<reference evidence="3" key="1">
    <citation type="journal article" date="1999" name="Nature">
        <title>Sequence and analysis of chromosome 2 of the plant Arabidopsis thaliana.</title>
        <authorList>
            <person name="Lin X."/>
            <person name="Kaul S."/>
            <person name="Rounsley S.D."/>
            <person name="Shea T.P."/>
            <person name="Benito M.-I."/>
            <person name="Town C.D."/>
            <person name="Fujii C.Y."/>
            <person name="Mason T.M."/>
            <person name="Bowman C.L."/>
            <person name="Barnstead M.E."/>
            <person name="Feldblyum T.V."/>
            <person name="Buell C.R."/>
            <person name="Ketchum K.A."/>
            <person name="Lee J.J."/>
            <person name="Ronning C.M."/>
            <person name="Koo H.L."/>
            <person name="Moffat K.S."/>
            <person name="Cronin L.A."/>
            <person name="Shen M."/>
            <person name="Pai G."/>
            <person name="Van Aken S."/>
            <person name="Umayam L."/>
            <person name="Tallon L.J."/>
            <person name="Gill J.E."/>
            <person name="Adams M.D."/>
            <person name="Carrera A.J."/>
            <person name="Creasy T.H."/>
            <person name="Goodman H.M."/>
            <person name="Somerville C.R."/>
            <person name="Copenhaver G.P."/>
            <person name="Preuss D."/>
            <person name="Nierman W.C."/>
            <person name="White O."/>
            <person name="Eisen J.A."/>
            <person name="Salzberg S.L."/>
            <person name="Fraser C.M."/>
            <person name="Venter J.C."/>
        </authorList>
    </citation>
    <scope>NUCLEOTIDE SEQUENCE [LARGE SCALE GENOMIC DNA]</scope>
    <source>
        <strain>cv. Columbia</strain>
    </source>
</reference>
<reference key="2">
    <citation type="journal article" date="2017" name="Plant J.">
        <title>Araport11: a complete reannotation of the Arabidopsis thaliana reference genome.</title>
        <authorList>
            <person name="Cheng C.Y."/>
            <person name="Krishnakumar V."/>
            <person name="Chan A.P."/>
            <person name="Thibaud-Nissen F."/>
            <person name="Schobel S."/>
            <person name="Town C.D."/>
        </authorList>
    </citation>
    <scope>GENOME REANNOTATION</scope>
    <source>
        <strain>cv. Columbia</strain>
    </source>
</reference>
<reference evidence="3" key="3">
    <citation type="journal article" date="2001" name="Plant Mol. Biol.">
        <title>Two large Arabidopsis thaliana gene families are homologous to the Brassica gene superfamily that encodes pollen coat proteins and the male component of the self-incompatibility response.</title>
        <authorList>
            <person name="Vanoosthuyse V."/>
            <person name="Miege C."/>
            <person name="Dumas C."/>
            <person name="Cock J.M."/>
        </authorList>
    </citation>
    <scope>IDENTIFICATION</scope>
</reference>
<reference key="4">
    <citation type="journal article" date="2005" name="Plant Physiol.">
        <title>Genome organization of more than 300 defensin-like genes in Arabidopsis.</title>
        <authorList>
            <person name="Silverstein K.A.T."/>
            <person name="Graham M.A."/>
            <person name="Paape T.D."/>
            <person name="VandenBosch K.A."/>
        </authorList>
    </citation>
    <scope>GENE FAMILY</scope>
</reference>
<dbReference type="EMBL" id="AC006951">
    <property type="status" value="NOT_ANNOTATED_CDS"/>
    <property type="molecule type" value="Genomic_DNA"/>
</dbReference>
<dbReference type="EMBL" id="CP002685">
    <property type="protein sequence ID" value="AEC05834.1"/>
    <property type="molecule type" value="Genomic_DNA"/>
</dbReference>
<dbReference type="RefSeq" id="NP_001031319.1">
    <property type="nucleotide sequence ID" value="NM_001036242.1"/>
</dbReference>
<dbReference type="SMR" id="P82791"/>
<dbReference type="PaxDb" id="3702-AT2G04425.1"/>
<dbReference type="EnsemblPlants" id="AT2G04425.1">
    <property type="protein sequence ID" value="AT2G04425.1"/>
    <property type="gene ID" value="AT2G04425"/>
</dbReference>
<dbReference type="GeneID" id="3768214"/>
<dbReference type="Gramene" id="AT2G04425.1">
    <property type="protein sequence ID" value="AT2G04425.1"/>
    <property type="gene ID" value="AT2G04425"/>
</dbReference>
<dbReference type="KEGG" id="ath:AT2G04425"/>
<dbReference type="Araport" id="AT2G04425"/>
<dbReference type="TAIR" id="AT2G04425">
    <property type="gene designation" value="LCR82"/>
</dbReference>
<dbReference type="HOGENOM" id="CLU_180308_0_0_1"/>
<dbReference type="InParanoid" id="P82791"/>
<dbReference type="OMA" id="MFALICI"/>
<dbReference type="PRO" id="PR:P82791"/>
<dbReference type="Proteomes" id="UP000006548">
    <property type="component" value="Chromosome 2"/>
</dbReference>
<dbReference type="ExpressionAtlas" id="P82791">
    <property type="expression patterns" value="baseline and differential"/>
</dbReference>
<dbReference type="GO" id="GO:0005576">
    <property type="term" value="C:extracellular region"/>
    <property type="evidence" value="ECO:0007669"/>
    <property type="project" value="UniProtKB-SubCell"/>
</dbReference>
<dbReference type="GO" id="GO:0050832">
    <property type="term" value="P:defense response to fungus"/>
    <property type="evidence" value="ECO:0007669"/>
    <property type="project" value="UniProtKB-KW"/>
</dbReference>
<dbReference type="GO" id="GO:0031640">
    <property type="term" value="P:killing of cells of another organism"/>
    <property type="evidence" value="ECO:0007669"/>
    <property type="project" value="UniProtKB-KW"/>
</dbReference>
<dbReference type="InterPro" id="IPR056373">
    <property type="entry name" value="Defensin-like_dom"/>
</dbReference>
<dbReference type="InterPro" id="IPR036574">
    <property type="entry name" value="Scorpion_toxin-like_sf"/>
</dbReference>
<dbReference type="Pfam" id="PF24552">
    <property type="entry name" value="Defensin"/>
    <property type="match status" value="1"/>
</dbReference>
<dbReference type="SUPFAM" id="SSF57095">
    <property type="entry name" value="Scorpion toxin-like"/>
    <property type="match status" value="1"/>
</dbReference>
<sequence>MAITKMSSLIILSLMMLTFIYIPMISGQFRGIKQCEMKCYSTPECNATCLHEGYEEGKCLKSWDGGVECCCLGLLASSHQDSSPISSPHYIIFHGICILNI</sequence>
<comment type="subcellular location">
    <subcellularLocation>
        <location evidence="1">Secreted</location>
    </subcellularLocation>
</comment>
<comment type="similarity">
    <text evidence="3">Belongs to the DEFL family.</text>
</comment>
<gene>
    <name type="primary">LCR82</name>
    <name type="ordered locus">At2g04425</name>
    <name type="ORF">T1O3</name>
</gene>
<evidence type="ECO:0000250" key="1"/>
<evidence type="ECO:0000255" key="2"/>
<evidence type="ECO:0000305" key="3"/>
<feature type="signal peptide" evidence="2">
    <location>
        <begin position="1"/>
        <end position="27"/>
    </location>
</feature>
<feature type="chain" id="PRO_0000017306" description="Putative defensin-like protein 86">
    <location>
        <begin position="28"/>
        <end position="101"/>
    </location>
</feature>
<feature type="disulfide bond" evidence="1">
    <location>
        <begin position="35"/>
        <end position="71"/>
    </location>
</feature>
<feature type="disulfide bond" evidence="1">
    <location>
        <begin position="39"/>
        <end position="59"/>
    </location>
</feature>
<feature type="disulfide bond" evidence="1">
    <location>
        <begin position="45"/>
        <end position="69"/>
    </location>
</feature>
<feature type="disulfide bond" evidence="1">
    <location>
        <begin position="49"/>
        <end position="70"/>
    </location>
</feature>
<keyword id="KW-0929">Antimicrobial</keyword>
<keyword id="KW-1015">Disulfide bond</keyword>
<keyword id="KW-0295">Fungicide</keyword>
<keyword id="KW-0611">Plant defense</keyword>
<keyword id="KW-1185">Reference proteome</keyword>
<keyword id="KW-0964">Secreted</keyword>
<keyword id="KW-0732">Signal</keyword>
<protein>
    <recommendedName>
        <fullName>Putative defensin-like protein 86</fullName>
    </recommendedName>
    <alternativeName>
        <fullName>Putative low-molecular-weight cysteine-rich protein 82</fullName>
        <shortName>Protein LCR82</shortName>
    </alternativeName>
</protein>
<accession>P82791</accession>
<organism evidence="3">
    <name type="scientific">Arabidopsis thaliana</name>
    <name type="common">Mouse-ear cress</name>
    <dbReference type="NCBI Taxonomy" id="3702"/>
    <lineage>
        <taxon>Eukaryota</taxon>
        <taxon>Viridiplantae</taxon>
        <taxon>Streptophyta</taxon>
        <taxon>Embryophyta</taxon>
        <taxon>Tracheophyta</taxon>
        <taxon>Spermatophyta</taxon>
        <taxon>Magnoliopsida</taxon>
        <taxon>eudicotyledons</taxon>
        <taxon>Gunneridae</taxon>
        <taxon>Pentapetalae</taxon>
        <taxon>rosids</taxon>
        <taxon>malvids</taxon>
        <taxon>Brassicales</taxon>
        <taxon>Brassicaceae</taxon>
        <taxon>Camelineae</taxon>
        <taxon>Arabidopsis</taxon>
    </lineage>
</organism>
<name>DEF86_ARATH</name>
<proteinExistence type="inferred from homology"/>